<evidence type="ECO:0000255" key="1">
    <source>
        <dbReference type="HAMAP-Rule" id="MF_01384"/>
    </source>
</evidence>
<evidence type="ECO:0000305" key="2"/>
<dbReference type="EMBL" id="CP000103">
    <property type="protein sequence ID" value="ABB74541.1"/>
    <property type="status" value="ALT_INIT"/>
    <property type="molecule type" value="Genomic_DNA"/>
</dbReference>
<dbReference type="RefSeq" id="WP_041352427.1">
    <property type="nucleotide sequence ID" value="NC_007614.1"/>
</dbReference>
<dbReference type="SMR" id="Q2Y9N0"/>
<dbReference type="STRING" id="323848.Nmul_A1238"/>
<dbReference type="KEGG" id="nmu:Nmul_A1238"/>
<dbReference type="eggNOG" id="COG0829">
    <property type="taxonomic scope" value="Bacteria"/>
</dbReference>
<dbReference type="HOGENOM" id="CLU_056339_0_0_4"/>
<dbReference type="OrthoDB" id="9798842at2"/>
<dbReference type="Proteomes" id="UP000002718">
    <property type="component" value="Chromosome"/>
</dbReference>
<dbReference type="GO" id="GO:0005737">
    <property type="term" value="C:cytoplasm"/>
    <property type="evidence" value="ECO:0007669"/>
    <property type="project" value="UniProtKB-SubCell"/>
</dbReference>
<dbReference type="GO" id="GO:0016151">
    <property type="term" value="F:nickel cation binding"/>
    <property type="evidence" value="ECO:0007669"/>
    <property type="project" value="UniProtKB-UniRule"/>
</dbReference>
<dbReference type="HAMAP" id="MF_01384">
    <property type="entry name" value="UreD"/>
    <property type="match status" value="1"/>
</dbReference>
<dbReference type="InterPro" id="IPR002669">
    <property type="entry name" value="UreD"/>
</dbReference>
<dbReference type="PANTHER" id="PTHR33643">
    <property type="entry name" value="UREASE ACCESSORY PROTEIN D"/>
    <property type="match status" value="1"/>
</dbReference>
<dbReference type="PANTHER" id="PTHR33643:SF1">
    <property type="entry name" value="UREASE ACCESSORY PROTEIN D"/>
    <property type="match status" value="1"/>
</dbReference>
<dbReference type="Pfam" id="PF01774">
    <property type="entry name" value="UreD"/>
    <property type="match status" value="1"/>
</dbReference>
<comment type="function">
    <text evidence="1">Required for maturation of urease via the functional incorporation of the urease nickel metallocenter.</text>
</comment>
<comment type="subunit">
    <text evidence="1">UreD, UreF and UreG form a complex that acts as a GTP-hydrolysis-dependent molecular chaperone, activating the urease apoprotein by helping to assemble the nickel containing metallocenter of UreC. The UreE protein probably delivers the nickel.</text>
</comment>
<comment type="subcellular location">
    <subcellularLocation>
        <location evidence="1">Cytoplasm</location>
    </subcellularLocation>
</comment>
<comment type="similarity">
    <text evidence="1">Belongs to the UreD family.</text>
</comment>
<comment type="sequence caution" evidence="2">
    <conflict type="erroneous initiation">
        <sequence resource="EMBL-CDS" id="ABB74541"/>
    </conflict>
</comment>
<protein>
    <recommendedName>
        <fullName evidence="1">Urease accessory protein UreD</fullName>
    </recommendedName>
</protein>
<proteinExistence type="inferred from homology"/>
<feature type="chain" id="PRO_0000340467" description="Urease accessory protein UreD">
    <location>
        <begin position="1"/>
        <end position="279"/>
    </location>
</feature>
<organism>
    <name type="scientific">Nitrosospira multiformis (strain ATCC 25196 / NCIMB 11849 / C 71)</name>
    <dbReference type="NCBI Taxonomy" id="323848"/>
    <lineage>
        <taxon>Bacteria</taxon>
        <taxon>Pseudomonadati</taxon>
        <taxon>Pseudomonadota</taxon>
        <taxon>Betaproteobacteria</taxon>
        <taxon>Nitrosomonadales</taxon>
        <taxon>Nitrosomonadaceae</taxon>
        <taxon>Nitrosospira</taxon>
    </lineage>
</organism>
<accession>Q2Y9N0</accession>
<reference key="1">
    <citation type="submission" date="2005-08" db="EMBL/GenBank/DDBJ databases">
        <title>Complete sequence of chromosome 1 of Nitrosospira multiformis ATCC 25196.</title>
        <authorList>
            <person name="Copeland A."/>
            <person name="Lucas S."/>
            <person name="Lapidus A."/>
            <person name="Barry K."/>
            <person name="Detter J.C."/>
            <person name="Glavina T."/>
            <person name="Hammon N."/>
            <person name="Israni S."/>
            <person name="Pitluck S."/>
            <person name="Chain P."/>
            <person name="Malfatti S."/>
            <person name="Shin M."/>
            <person name="Vergez L."/>
            <person name="Schmutz J."/>
            <person name="Larimer F."/>
            <person name="Land M."/>
            <person name="Hauser L."/>
            <person name="Kyrpides N."/>
            <person name="Lykidis A."/>
            <person name="Richardson P."/>
        </authorList>
    </citation>
    <scope>NUCLEOTIDE SEQUENCE [LARGE SCALE GENOMIC DNA]</scope>
    <source>
        <strain>ATCC 25196 / NCIMB 11849 / C 71</strain>
    </source>
</reference>
<name>URED_NITMU</name>
<keyword id="KW-0143">Chaperone</keyword>
<keyword id="KW-0963">Cytoplasm</keyword>
<keyword id="KW-0996">Nickel insertion</keyword>
<keyword id="KW-1185">Reference proteome</keyword>
<gene>
    <name evidence="1" type="primary">ureD</name>
    <name type="ordered locus">Nmul_A1238</name>
</gene>
<sequence>MASDSPLRAHLRLKFAESSGITRMVERDHHGPLLVQKPLYPEGYEVCQAVVIHPPGGVVAGDELGIRVHVGPSAHAQITSPGATKWYKSKGRTARQHVYLHAEAGGVLEWMPQETIFFNNARVMLHHEVELEKDSVYMSCEILCFGRTAFGESFDSGEIKQHTSIRQEGKLVWFEKLRLEGGSKAMNGRLALAGRAVCATFIMSGKPLPAQAIDLVREEAVRIGGESGQVGITQLKSLLVARFLGDSSEVARHVMLCIWRAVRPITLGRPAIVPRSWNT</sequence>